<organism>
    <name type="scientific">Proteus mirabilis (strain HI4320)</name>
    <dbReference type="NCBI Taxonomy" id="529507"/>
    <lineage>
        <taxon>Bacteria</taxon>
        <taxon>Pseudomonadati</taxon>
        <taxon>Pseudomonadota</taxon>
        <taxon>Gammaproteobacteria</taxon>
        <taxon>Enterobacterales</taxon>
        <taxon>Morganellaceae</taxon>
        <taxon>Proteus</taxon>
    </lineage>
</organism>
<dbReference type="EC" id="1.17.1.8" evidence="1"/>
<dbReference type="EMBL" id="AM942759">
    <property type="protein sequence ID" value="CAR40259.1"/>
    <property type="molecule type" value="Genomic_DNA"/>
</dbReference>
<dbReference type="RefSeq" id="WP_012367441.1">
    <property type="nucleotide sequence ID" value="NC_010554.1"/>
</dbReference>
<dbReference type="SMR" id="B4F2T9"/>
<dbReference type="EnsemblBacteria" id="CAR40259">
    <property type="protein sequence ID" value="CAR40259"/>
    <property type="gene ID" value="PMI0019"/>
</dbReference>
<dbReference type="GeneID" id="6800993"/>
<dbReference type="KEGG" id="pmr:PMI0019"/>
<dbReference type="PATRIC" id="fig|529507.6.peg.20"/>
<dbReference type="eggNOG" id="COG0289">
    <property type="taxonomic scope" value="Bacteria"/>
</dbReference>
<dbReference type="HOGENOM" id="CLU_047479_2_1_6"/>
<dbReference type="UniPathway" id="UPA00034">
    <property type="reaction ID" value="UER00018"/>
</dbReference>
<dbReference type="Proteomes" id="UP000008319">
    <property type="component" value="Chromosome"/>
</dbReference>
<dbReference type="GO" id="GO:0005829">
    <property type="term" value="C:cytosol"/>
    <property type="evidence" value="ECO:0007669"/>
    <property type="project" value="TreeGrafter"/>
</dbReference>
<dbReference type="GO" id="GO:0008839">
    <property type="term" value="F:4-hydroxy-tetrahydrodipicolinate reductase"/>
    <property type="evidence" value="ECO:0007669"/>
    <property type="project" value="UniProtKB-EC"/>
</dbReference>
<dbReference type="GO" id="GO:0051287">
    <property type="term" value="F:NAD binding"/>
    <property type="evidence" value="ECO:0007669"/>
    <property type="project" value="UniProtKB-UniRule"/>
</dbReference>
<dbReference type="GO" id="GO:0050661">
    <property type="term" value="F:NADP binding"/>
    <property type="evidence" value="ECO:0007669"/>
    <property type="project" value="UniProtKB-UniRule"/>
</dbReference>
<dbReference type="GO" id="GO:0016726">
    <property type="term" value="F:oxidoreductase activity, acting on CH or CH2 groups, NAD or NADP as acceptor"/>
    <property type="evidence" value="ECO:0007669"/>
    <property type="project" value="UniProtKB-UniRule"/>
</dbReference>
<dbReference type="GO" id="GO:0019877">
    <property type="term" value="P:diaminopimelate biosynthetic process"/>
    <property type="evidence" value="ECO:0007669"/>
    <property type="project" value="UniProtKB-UniRule"/>
</dbReference>
<dbReference type="GO" id="GO:0009089">
    <property type="term" value="P:lysine biosynthetic process via diaminopimelate"/>
    <property type="evidence" value="ECO:0007669"/>
    <property type="project" value="UniProtKB-UniRule"/>
</dbReference>
<dbReference type="CDD" id="cd02274">
    <property type="entry name" value="DHDPR_N"/>
    <property type="match status" value="1"/>
</dbReference>
<dbReference type="FunFam" id="3.30.360.10:FF:000004">
    <property type="entry name" value="4-hydroxy-tetrahydrodipicolinate reductase"/>
    <property type="match status" value="1"/>
</dbReference>
<dbReference type="FunFam" id="3.40.50.720:FF:000048">
    <property type="entry name" value="4-hydroxy-tetrahydrodipicolinate reductase"/>
    <property type="match status" value="1"/>
</dbReference>
<dbReference type="Gene3D" id="3.30.360.10">
    <property type="entry name" value="Dihydrodipicolinate Reductase, domain 2"/>
    <property type="match status" value="1"/>
</dbReference>
<dbReference type="Gene3D" id="3.40.50.720">
    <property type="entry name" value="NAD(P)-binding Rossmann-like Domain"/>
    <property type="match status" value="1"/>
</dbReference>
<dbReference type="HAMAP" id="MF_00102">
    <property type="entry name" value="DapB"/>
    <property type="match status" value="1"/>
</dbReference>
<dbReference type="InterPro" id="IPR022663">
    <property type="entry name" value="DapB_C"/>
</dbReference>
<dbReference type="InterPro" id="IPR000846">
    <property type="entry name" value="DapB_N"/>
</dbReference>
<dbReference type="InterPro" id="IPR022664">
    <property type="entry name" value="DapB_N_CS"/>
</dbReference>
<dbReference type="InterPro" id="IPR023940">
    <property type="entry name" value="DHDPR_bac"/>
</dbReference>
<dbReference type="InterPro" id="IPR036291">
    <property type="entry name" value="NAD(P)-bd_dom_sf"/>
</dbReference>
<dbReference type="NCBIfam" id="TIGR00036">
    <property type="entry name" value="dapB"/>
    <property type="match status" value="1"/>
</dbReference>
<dbReference type="PANTHER" id="PTHR20836:SF0">
    <property type="entry name" value="4-HYDROXY-TETRAHYDRODIPICOLINATE REDUCTASE 1, CHLOROPLASTIC-RELATED"/>
    <property type="match status" value="1"/>
</dbReference>
<dbReference type="PANTHER" id="PTHR20836">
    <property type="entry name" value="DIHYDRODIPICOLINATE REDUCTASE"/>
    <property type="match status" value="1"/>
</dbReference>
<dbReference type="Pfam" id="PF05173">
    <property type="entry name" value="DapB_C"/>
    <property type="match status" value="1"/>
</dbReference>
<dbReference type="Pfam" id="PF01113">
    <property type="entry name" value="DapB_N"/>
    <property type="match status" value="1"/>
</dbReference>
<dbReference type="PIRSF" id="PIRSF000161">
    <property type="entry name" value="DHPR"/>
    <property type="match status" value="1"/>
</dbReference>
<dbReference type="SUPFAM" id="SSF55347">
    <property type="entry name" value="Glyceraldehyde-3-phosphate dehydrogenase-like, C-terminal domain"/>
    <property type="match status" value="1"/>
</dbReference>
<dbReference type="SUPFAM" id="SSF51735">
    <property type="entry name" value="NAD(P)-binding Rossmann-fold domains"/>
    <property type="match status" value="1"/>
</dbReference>
<dbReference type="PROSITE" id="PS01298">
    <property type="entry name" value="DAPB"/>
    <property type="match status" value="1"/>
</dbReference>
<reference key="1">
    <citation type="journal article" date="2008" name="J. Bacteriol.">
        <title>Complete genome sequence of uropathogenic Proteus mirabilis, a master of both adherence and motility.</title>
        <authorList>
            <person name="Pearson M.M."/>
            <person name="Sebaihia M."/>
            <person name="Churcher C."/>
            <person name="Quail M.A."/>
            <person name="Seshasayee A.S."/>
            <person name="Luscombe N.M."/>
            <person name="Abdellah Z."/>
            <person name="Arrosmith C."/>
            <person name="Atkin B."/>
            <person name="Chillingworth T."/>
            <person name="Hauser H."/>
            <person name="Jagels K."/>
            <person name="Moule S."/>
            <person name="Mungall K."/>
            <person name="Norbertczak H."/>
            <person name="Rabbinowitsch E."/>
            <person name="Walker D."/>
            <person name="Whithead S."/>
            <person name="Thomson N.R."/>
            <person name="Rather P.N."/>
            <person name="Parkhill J."/>
            <person name="Mobley H.L.T."/>
        </authorList>
    </citation>
    <scope>NUCLEOTIDE SEQUENCE [LARGE SCALE GENOMIC DNA]</scope>
    <source>
        <strain>HI4320</strain>
    </source>
</reference>
<proteinExistence type="inferred from homology"/>
<sequence>MSATELRLAVVGAGGRMGRQLIQAINQQQGVVLGAAFERTNSSLIGADAGELAGIGHIGITVTDNLLAQVGQFDILIDFTRPEGTLSHLAFCVEHHKGMIIGTTGFDEEGKKAINCAAQTIPIVFAANFSVGVNLVLKLLEKAAKVMGSYSDIEIVEAHHRHKVDAPSGTALAMGESIAETLGRDLKDCAVYQRVGHTGERDPRSIGFATIRAGDIVGEHTAIFADIGERVEISHKASSRMTFANGAVKSAIWLSEKKSGLYNMKDVLSLEEL</sequence>
<comment type="function">
    <text evidence="1">Catalyzes the conversion of 4-hydroxy-tetrahydrodipicolinate (HTPA) to tetrahydrodipicolinate.</text>
</comment>
<comment type="catalytic activity">
    <reaction evidence="1">
        <text>(S)-2,3,4,5-tetrahydrodipicolinate + NAD(+) + H2O = (2S,4S)-4-hydroxy-2,3,4,5-tetrahydrodipicolinate + NADH + H(+)</text>
        <dbReference type="Rhea" id="RHEA:35323"/>
        <dbReference type="ChEBI" id="CHEBI:15377"/>
        <dbReference type="ChEBI" id="CHEBI:15378"/>
        <dbReference type="ChEBI" id="CHEBI:16845"/>
        <dbReference type="ChEBI" id="CHEBI:57540"/>
        <dbReference type="ChEBI" id="CHEBI:57945"/>
        <dbReference type="ChEBI" id="CHEBI:67139"/>
        <dbReference type="EC" id="1.17.1.8"/>
    </reaction>
</comment>
<comment type="catalytic activity">
    <reaction evidence="1">
        <text>(S)-2,3,4,5-tetrahydrodipicolinate + NADP(+) + H2O = (2S,4S)-4-hydroxy-2,3,4,5-tetrahydrodipicolinate + NADPH + H(+)</text>
        <dbReference type="Rhea" id="RHEA:35331"/>
        <dbReference type="ChEBI" id="CHEBI:15377"/>
        <dbReference type="ChEBI" id="CHEBI:15378"/>
        <dbReference type="ChEBI" id="CHEBI:16845"/>
        <dbReference type="ChEBI" id="CHEBI:57783"/>
        <dbReference type="ChEBI" id="CHEBI:58349"/>
        <dbReference type="ChEBI" id="CHEBI:67139"/>
        <dbReference type="EC" id="1.17.1.8"/>
    </reaction>
</comment>
<comment type="pathway">
    <text evidence="1">Amino-acid biosynthesis; L-lysine biosynthesis via DAP pathway; (S)-tetrahydrodipicolinate from L-aspartate: step 4/4.</text>
</comment>
<comment type="subunit">
    <text evidence="1">Homotetramer.</text>
</comment>
<comment type="subcellular location">
    <subcellularLocation>
        <location evidence="1">Cytoplasm</location>
    </subcellularLocation>
</comment>
<comment type="similarity">
    <text evidence="1">Belongs to the DapB family.</text>
</comment>
<comment type="caution">
    <text evidence="2">Was originally thought to be a dihydrodipicolinate reductase (DHDPR), catalyzing the conversion of dihydrodipicolinate to tetrahydrodipicolinate. However, it was shown in E.coli that the substrate of the enzymatic reaction is not dihydrodipicolinate (DHDP) but in fact (2S,4S)-4-hydroxy-2,3,4,5-tetrahydrodipicolinic acid (HTPA), the product released by the DapA-catalyzed reaction.</text>
</comment>
<name>DAPB_PROMH</name>
<gene>
    <name evidence="1" type="primary">dapB</name>
    <name type="ordered locus">PMI0019</name>
</gene>
<feature type="chain" id="PRO_1000093988" description="4-hydroxy-tetrahydrodipicolinate reductase">
    <location>
        <begin position="1"/>
        <end position="273"/>
    </location>
</feature>
<feature type="active site" description="Proton donor/acceptor" evidence="1">
    <location>
        <position position="159"/>
    </location>
</feature>
<feature type="active site" description="Proton donor" evidence="1">
    <location>
        <position position="163"/>
    </location>
</feature>
<feature type="binding site" evidence="1">
    <location>
        <begin position="12"/>
        <end position="17"/>
    </location>
    <ligand>
        <name>NAD(+)</name>
        <dbReference type="ChEBI" id="CHEBI:57540"/>
    </ligand>
</feature>
<feature type="binding site" evidence="1">
    <location>
        <position position="38"/>
    </location>
    <ligand>
        <name>NAD(+)</name>
        <dbReference type="ChEBI" id="CHEBI:57540"/>
    </ligand>
</feature>
<feature type="binding site" evidence="1">
    <location>
        <position position="39"/>
    </location>
    <ligand>
        <name>NADP(+)</name>
        <dbReference type="ChEBI" id="CHEBI:58349"/>
    </ligand>
</feature>
<feature type="binding site" evidence="1">
    <location>
        <begin position="102"/>
        <end position="104"/>
    </location>
    <ligand>
        <name>NAD(+)</name>
        <dbReference type="ChEBI" id="CHEBI:57540"/>
    </ligand>
</feature>
<feature type="binding site" evidence="1">
    <location>
        <begin position="126"/>
        <end position="129"/>
    </location>
    <ligand>
        <name>NAD(+)</name>
        <dbReference type="ChEBI" id="CHEBI:57540"/>
    </ligand>
</feature>
<feature type="binding site" evidence="1">
    <location>
        <position position="160"/>
    </location>
    <ligand>
        <name>(S)-2,3,4,5-tetrahydrodipicolinate</name>
        <dbReference type="ChEBI" id="CHEBI:16845"/>
    </ligand>
</feature>
<feature type="binding site" evidence="1">
    <location>
        <begin position="169"/>
        <end position="170"/>
    </location>
    <ligand>
        <name>(S)-2,3,4,5-tetrahydrodipicolinate</name>
        <dbReference type="ChEBI" id="CHEBI:16845"/>
    </ligand>
</feature>
<accession>B4F2T9</accession>
<protein>
    <recommendedName>
        <fullName evidence="1">4-hydroxy-tetrahydrodipicolinate reductase</fullName>
        <shortName evidence="1">HTPA reductase</shortName>
        <ecNumber evidence="1">1.17.1.8</ecNumber>
    </recommendedName>
</protein>
<evidence type="ECO:0000255" key="1">
    <source>
        <dbReference type="HAMAP-Rule" id="MF_00102"/>
    </source>
</evidence>
<evidence type="ECO:0000305" key="2"/>
<keyword id="KW-0028">Amino-acid biosynthesis</keyword>
<keyword id="KW-0963">Cytoplasm</keyword>
<keyword id="KW-0220">Diaminopimelate biosynthesis</keyword>
<keyword id="KW-0457">Lysine biosynthesis</keyword>
<keyword id="KW-0520">NAD</keyword>
<keyword id="KW-0521">NADP</keyword>
<keyword id="KW-0560">Oxidoreductase</keyword>
<keyword id="KW-1185">Reference proteome</keyword>